<keyword id="KW-1015">Disulfide bond</keyword>
<keyword id="KW-0249">Electron transport</keyword>
<keyword id="KW-0472">Membrane</keyword>
<keyword id="KW-0496">Mitochondrion</keyword>
<keyword id="KW-0999">Mitochondrion inner membrane</keyword>
<keyword id="KW-1185">Reference proteome</keyword>
<keyword id="KW-0679">Respiratory chain</keyword>
<keyword id="KW-0813">Transport</keyword>
<comment type="function">
    <text evidence="1">Accessory subunit of the mitochondrial membrane respiratory chain NADH dehydrogenase (Complex I), that is believed not to be involved in catalysis. Complex I functions in the transfer of electrons from NADH to the respiratory chain. The immediate electron acceptor for the enzyme is believed to be ubiquinone (By similarity).</text>
</comment>
<comment type="subunit">
    <text evidence="1">Complex I is composed of 45 different subunits.</text>
</comment>
<comment type="subcellular location">
    <subcellularLocation>
        <location evidence="2">Mitochondrion inner membrane</location>
        <topology evidence="2">Peripheral membrane protein</topology>
    </subcellularLocation>
    <subcellularLocation>
        <location evidence="2">Mitochondrion intermembrane space</location>
    </subcellularLocation>
</comment>
<comment type="domain">
    <text evidence="1">Contains two C-X9-C motifs that are predicted to form a helix-coil-helix structure, permitting the formation of intramolecular disulfide bonds.</text>
</comment>
<comment type="similarity">
    <text evidence="4">Belongs to the complex I NDUFB7 subunit family.</text>
</comment>
<feature type="chain" id="PRO_0000330323" description="NADH dehydrogenase [ubiquinone] 1 beta subcomplex subunit 7">
    <location>
        <begin position="1"/>
        <end position="112"/>
    </location>
</feature>
<feature type="domain" description="CHCH" evidence="3">
    <location>
        <begin position="35"/>
        <end position="77"/>
    </location>
</feature>
<feature type="short sequence motif" description="Cx9C motif 1" evidence="3">
    <location>
        <begin position="38"/>
        <end position="48"/>
    </location>
</feature>
<feature type="short sequence motif" description="Cx9C motif 2" evidence="3">
    <location>
        <begin position="59"/>
        <end position="69"/>
    </location>
</feature>
<feature type="disulfide bond" evidence="3">
    <location>
        <begin position="38"/>
        <end position="69"/>
    </location>
</feature>
<feature type="disulfide bond" evidence="3">
    <location>
        <begin position="48"/>
        <end position="59"/>
    </location>
</feature>
<dbReference type="EMBL" id="AAFI02000037">
    <property type="protein sequence ID" value="EAL67099.1"/>
    <property type="molecule type" value="Genomic_DNA"/>
</dbReference>
<dbReference type="RefSeq" id="XP_641070.1">
    <property type="nucleotide sequence ID" value="XM_635978.1"/>
</dbReference>
<dbReference type="SMR" id="Q54V61"/>
<dbReference type="FunCoup" id="Q54V61">
    <property type="interactions" value="480"/>
</dbReference>
<dbReference type="STRING" id="44689.Q54V61"/>
<dbReference type="PaxDb" id="44689-DDB0206064"/>
<dbReference type="EnsemblProtists" id="EAL67099">
    <property type="protein sequence ID" value="EAL67099"/>
    <property type="gene ID" value="DDB_G0280595"/>
</dbReference>
<dbReference type="GeneID" id="8622628"/>
<dbReference type="KEGG" id="ddi:DDB_G0280595"/>
<dbReference type="dictyBase" id="DDB_G0280595">
    <property type="gene designation" value="ndufb7"/>
</dbReference>
<dbReference type="VEuPathDB" id="AmoebaDB:DDB_G0280595"/>
<dbReference type="eggNOG" id="KOG3468">
    <property type="taxonomic scope" value="Eukaryota"/>
</dbReference>
<dbReference type="HOGENOM" id="CLU_2150613_0_0_1"/>
<dbReference type="InParanoid" id="Q54V61"/>
<dbReference type="OMA" id="CQYDEYL"/>
<dbReference type="PhylomeDB" id="Q54V61"/>
<dbReference type="PRO" id="PR:Q54V61"/>
<dbReference type="Proteomes" id="UP000002195">
    <property type="component" value="Chromosome 3"/>
</dbReference>
<dbReference type="GO" id="GO:0005743">
    <property type="term" value="C:mitochondrial inner membrane"/>
    <property type="evidence" value="ECO:0007669"/>
    <property type="project" value="UniProtKB-SubCell"/>
</dbReference>
<dbReference type="GO" id="GO:0005758">
    <property type="term" value="C:mitochondrial intermembrane space"/>
    <property type="evidence" value="ECO:0007669"/>
    <property type="project" value="UniProtKB-SubCell"/>
</dbReference>
<dbReference type="GO" id="GO:0045271">
    <property type="term" value="C:respiratory chain complex I"/>
    <property type="evidence" value="ECO:0000318"/>
    <property type="project" value="GO_Central"/>
</dbReference>
<dbReference type="InterPro" id="IPR008698">
    <property type="entry name" value="NDUB7"/>
</dbReference>
<dbReference type="PANTHER" id="PTHR20900:SF0">
    <property type="entry name" value="NADH DEHYDROGENASE [UBIQUINONE] 1 BETA SUBCOMPLEX SUBUNIT 7"/>
    <property type="match status" value="1"/>
</dbReference>
<dbReference type="PANTHER" id="PTHR20900">
    <property type="entry name" value="NADH:UBIQUINONE OXIDOREDUCTASE B18-LIKE SUBUNIT"/>
    <property type="match status" value="1"/>
</dbReference>
<dbReference type="Pfam" id="PF05676">
    <property type="entry name" value="NDUF_B7"/>
    <property type="match status" value="1"/>
</dbReference>
<dbReference type="PROSITE" id="PS51808">
    <property type="entry name" value="CHCH"/>
    <property type="match status" value="1"/>
</dbReference>
<proteinExistence type="inferred from homology"/>
<reference key="1">
    <citation type="journal article" date="2005" name="Nature">
        <title>The genome of the social amoeba Dictyostelium discoideum.</title>
        <authorList>
            <person name="Eichinger L."/>
            <person name="Pachebat J.A."/>
            <person name="Gloeckner G."/>
            <person name="Rajandream M.A."/>
            <person name="Sucgang R."/>
            <person name="Berriman M."/>
            <person name="Song J."/>
            <person name="Olsen R."/>
            <person name="Szafranski K."/>
            <person name="Xu Q."/>
            <person name="Tunggal B."/>
            <person name="Kummerfeld S."/>
            <person name="Madera M."/>
            <person name="Konfortov B.A."/>
            <person name="Rivero F."/>
            <person name="Bankier A.T."/>
            <person name="Lehmann R."/>
            <person name="Hamlin N."/>
            <person name="Davies R."/>
            <person name="Gaudet P."/>
            <person name="Fey P."/>
            <person name="Pilcher K."/>
            <person name="Chen G."/>
            <person name="Saunders D."/>
            <person name="Sodergren E.J."/>
            <person name="Davis P."/>
            <person name="Kerhornou A."/>
            <person name="Nie X."/>
            <person name="Hall N."/>
            <person name="Anjard C."/>
            <person name="Hemphill L."/>
            <person name="Bason N."/>
            <person name="Farbrother P."/>
            <person name="Desany B."/>
            <person name="Just E."/>
            <person name="Morio T."/>
            <person name="Rost R."/>
            <person name="Churcher C.M."/>
            <person name="Cooper J."/>
            <person name="Haydock S."/>
            <person name="van Driessche N."/>
            <person name="Cronin A."/>
            <person name="Goodhead I."/>
            <person name="Muzny D.M."/>
            <person name="Mourier T."/>
            <person name="Pain A."/>
            <person name="Lu M."/>
            <person name="Harper D."/>
            <person name="Lindsay R."/>
            <person name="Hauser H."/>
            <person name="James K.D."/>
            <person name="Quiles M."/>
            <person name="Madan Babu M."/>
            <person name="Saito T."/>
            <person name="Buchrieser C."/>
            <person name="Wardroper A."/>
            <person name="Felder M."/>
            <person name="Thangavelu M."/>
            <person name="Johnson D."/>
            <person name="Knights A."/>
            <person name="Loulseged H."/>
            <person name="Mungall K.L."/>
            <person name="Oliver K."/>
            <person name="Price C."/>
            <person name="Quail M.A."/>
            <person name="Urushihara H."/>
            <person name="Hernandez J."/>
            <person name="Rabbinowitsch E."/>
            <person name="Steffen D."/>
            <person name="Sanders M."/>
            <person name="Ma J."/>
            <person name="Kohara Y."/>
            <person name="Sharp S."/>
            <person name="Simmonds M.N."/>
            <person name="Spiegler S."/>
            <person name="Tivey A."/>
            <person name="Sugano S."/>
            <person name="White B."/>
            <person name="Walker D."/>
            <person name="Woodward J.R."/>
            <person name="Winckler T."/>
            <person name="Tanaka Y."/>
            <person name="Shaulsky G."/>
            <person name="Schleicher M."/>
            <person name="Weinstock G.M."/>
            <person name="Rosenthal A."/>
            <person name="Cox E.C."/>
            <person name="Chisholm R.L."/>
            <person name="Gibbs R.A."/>
            <person name="Loomis W.F."/>
            <person name="Platzer M."/>
            <person name="Kay R.R."/>
            <person name="Williams J.G."/>
            <person name="Dear P.H."/>
            <person name="Noegel A.A."/>
            <person name="Barrell B.G."/>
            <person name="Kuspa A."/>
        </authorList>
    </citation>
    <scope>NUCLEOTIDE SEQUENCE [LARGE SCALE GENOMIC DNA]</scope>
    <source>
        <strain>AX4</strain>
    </source>
</reference>
<evidence type="ECO:0000250" key="1"/>
<evidence type="ECO:0000250" key="2">
    <source>
        <dbReference type="UniProtKB" id="P17568"/>
    </source>
</evidence>
<evidence type="ECO:0000255" key="3">
    <source>
        <dbReference type="PROSITE-ProRule" id="PRU01150"/>
    </source>
</evidence>
<evidence type="ECO:0000305" key="4"/>
<accession>Q54V61</accession>
<sequence length="112" mass="13271">MTGHAPESTFNADGSRKMIATQQQCEDKNLPLSFRDYCAHLLIPLNDCRVSTYYAPWKCMDEKHAYEGCQYDEYLYRKIKKSEQDEAERIKREVVIEKENPKDRPYEEIKLS</sequence>
<protein>
    <recommendedName>
        <fullName>NADH dehydrogenase [ubiquinone] 1 beta subcomplex subunit 7</fullName>
    </recommendedName>
</protein>
<name>NDUB7_DICDI</name>
<gene>
    <name type="primary">ndufb7</name>
    <name type="ORF">DDB_G0280595</name>
</gene>
<organism>
    <name type="scientific">Dictyostelium discoideum</name>
    <name type="common">Social amoeba</name>
    <dbReference type="NCBI Taxonomy" id="44689"/>
    <lineage>
        <taxon>Eukaryota</taxon>
        <taxon>Amoebozoa</taxon>
        <taxon>Evosea</taxon>
        <taxon>Eumycetozoa</taxon>
        <taxon>Dictyostelia</taxon>
        <taxon>Dictyosteliales</taxon>
        <taxon>Dictyosteliaceae</taxon>
        <taxon>Dictyostelium</taxon>
    </lineage>
</organism>